<dbReference type="EC" id="6.3.4.3" evidence="1"/>
<dbReference type="EMBL" id="CP000233">
    <property type="protein sequence ID" value="ABD99652.1"/>
    <property type="molecule type" value="Genomic_DNA"/>
</dbReference>
<dbReference type="RefSeq" id="WP_011475989.1">
    <property type="nucleotide sequence ID" value="NC_007929.1"/>
</dbReference>
<dbReference type="RefSeq" id="YP_535735.1">
    <property type="nucleotide sequence ID" value="NC_007929.1"/>
</dbReference>
<dbReference type="SMR" id="Q1WTW0"/>
<dbReference type="STRING" id="362948.LSL_0842"/>
<dbReference type="KEGG" id="lsl:LSL_0842"/>
<dbReference type="PATRIC" id="fig|362948.14.peg.916"/>
<dbReference type="HOGENOM" id="CLU_003601_3_3_9"/>
<dbReference type="OrthoDB" id="9761733at2"/>
<dbReference type="UniPathway" id="UPA00193"/>
<dbReference type="Proteomes" id="UP000006559">
    <property type="component" value="Chromosome"/>
</dbReference>
<dbReference type="GO" id="GO:0005524">
    <property type="term" value="F:ATP binding"/>
    <property type="evidence" value="ECO:0007669"/>
    <property type="project" value="UniProtKB-UniRule"/>
</dbReference>
<dbReference type="GO" id="GO:0004329">
    <property type="term" value="F:formate-tetrahydrofolate ligase activity"/>
    <property type="evidence" value="ECO:0007669"/>
    <property type="project" value="UniProtKB-UniRule"/>
</dbReference>
<dbReference type="GO" id="GO:0035999">
    <property type="term" value="P:tetrahydrofolate interconversion"/>
    <property type="evidence" value="ECO:0007669"/>
    <property type="project" value="UniProtKB-UniRule"/>
</dbReference>
<dbReference type="CDD" id="cd00477">
    <property type="entry name" value="FTHFS"/>
    <property type="match status" value="1"/>
</dbReference>
<dbReference type="FunFam" id="3.30.1510.10:FF:000001">
    <property type="entry name" value="Formate--tetrahydrofolate ligase"/>
    <property type="match status" value="1"/>
</dbReference>
<dbReference type="FunFam" id="3.10.410.10:FF:000001">
    <property type="entry name" value="Putative formate--tetrahydrofolate ligase"/>
    <property type="match status" value="1"/>
</dbReference>
<dbReference type="Gene3D" id="3.30.1510.10">
    <property type="entry name" value="Domain 2, N(10)-formyltetrahydrofolate synthetase"/>
    <property type="match status" value="1"/>
</dbReference>
<dbReference type="Gene3D" id="3.10.410.10">
    <property type="entry name" value="Formyltetrahydrofolate synthetase, domain 3"/>
    <property type="match status" value="1"/>
</dbReference>
<dbReference type="Gene3D" id="3.40.50.300">
    <property type="entry name" value="P-loop containing nucleotide triphosphate hydrolases"/>
    <property type="match status" value="1"/>
</dbReference>
<dbReference type="HAMAP" id="MF_01543">
    <property type="entry name" value="FTHFS"/>
    <property type="match status" value="1"/>
</dbReference>
<dbReference type="InterPro" id="IPR000559">
    <property type="entry name" value="Formate_THF_ligase"/>
</dbReference>
<dbReference type="InterPro" id="IPR020628">
    <property type="entry name" value="Formate_THF_ligase_CS"/>
</dbReference>
<dbReference type="InterPro" id="IPR027417">
    <property type="entry name" value="P-loop_NTPase"/>
</dbReference>
<dbReference type="NCBIfam" id="NF010030">
    <property type="entry name" value="PRK13505.1"/>
    <property type="match status" value="1"/>
</dbReference>
<dbReference type="Pfam" id="PF01268">
    <property type="entry name" value="FTHFS"/>
    <property type="match status" value="1"/>
</dbReference>
<dbReference type="SUPFAM" id="SSF52540">
    <property type="entry name" value="P-loop containing nucleoside triphosphate hydrolases"/>
    <property type="match status" value="1"/>
</dbReference>
<dbReference type="PROSITE" id="PS00721">
    <property type="entry name" value="FTHFS_1"/>
    <property type="match status" value="1"/>
</dbReference>
<dbReference type="PROSITE" id="PS00722">
    <property type="entry name" value="FTHFS_2"/>
    <property type="match status" value="1"/>
</dbReference>
<proteinExistence type="inferred from homology"/>
<reference key="1">
    <citation type="journal article" date="2006" name="Proc. Natl. Acad. Sci. U.S.A.">
        <title>Multireplicon genome architecture of Lactobacillus salivarius.</title>
        <authorList>
            <person name="Claesson M.J."/>
            <person name="Li Y."/>
            <person name="Leahy S."/>
            <person name="Canchaya C."/>
            <person name="van Pijkeren J.P."/>
            <person name="Cerdeno-Tarraga A.M."/>
            <person name="Parkhill J."/>
            <person name="Flynn S."/>
            <person name="O'Sullivan G.C."/>
            <person name="Collins J.K."/>
            <person name="Higgins D."/>
            <person name="Shanahan F."/>
            <person name="Fitzgerald G.F."/>
            <person name="van Sinderen D."/>
            <person name="O'Toole P.W."/>
        </authorList>
    </citation>
    <scope>NUCLEOTIDE SEQUENCE [LARGE SCALE GENOMIC DNA]</scope>
    <source>
        <strain>UCC118</strain>
    </source>
</reference>
<keyword id="KW-0067">ATP-binding</keyword>
<keyword id="KW-0436">Ligase</keyword>
<keyword id="KW-0547">Nucleotide-binding</keyword>
<keyword id="KW-0554">One-carbon metabolism</keyword>
<keyword id="KW-1185">Reference proteome</keyword>
<sequence length="552" mass="59469">MKDIEIAQKSEMLPITEVAQKVGLTADEIEQYGKYKAKISLPLSAREQTKRKLVLVTAINPTPAGEGKSTVTVGLGDAFSLLNKKVMIALREPSLGPVMGMKGGATGGGYSQVVPMEDINLHFTGDMHALTTANNTLAALIDNHIYQGNKLNIDQRRVIWKRVLDINDRALRHVVIGLGGATQGIPREDGFDITVASELMAILCLSKDISDLKKRIGQIVIGYNFDKEPVTVDQLGVTGAITLLLKDACKPNLVQTLAHTPAIVHGGPFANIAHGCNSVLATQTALNLADYTITEAGFGADLGAEKFLDIKTPVLGKTPDTIVIVATARALKMNGGVAKDNLDEENVAAVEQGFANLKKHIQSMKRYNVPVVVAINKFTQDTDAELAKIVELCEQDDTKAIVADVWAKGGEGATELAKAVIESCDNDQEFTRLYNSDDSVEEKINKIVTEIYGGDGVEFSAKAKRQLRQFEKLGWNHLPVCMAKTQYSLSDNAKVLGAPKGFKIHVREFVPKLGAQFLVALTGNILTMPGLPKVPAADGMDVDENGKISGLY</sequence>
<name>FTHS_LIGS1</name>
<gene>
    <name evidence="1" type="primary">fhs</name>
    <name type="ordered locus">LSL_0842</name>
</gene>
<organism>
    <name type="scientific">Ligilactobacillus salivarius (strain UCC118)</name>
    <name type="common">Lactobacillus salivarius</name>
    <dbReference type="NCBI Taxonomy" id="362948"/>
    <lineage>
        <taxon>Bacteria</taxon>
        <taxon>Bacillati</taxon>
        <taxon>Bacillota</taxon>
        <taxon>Bacilli</taxon>
        <taxon>Lactobacillales</taxon>
        <taxon>Lactobacillaceae</taxon>
        <taxon>Ligilactobacillus</taxon>
    </lineage>
</organism>
<evidence type="ECO:0000255" key="1">
    <source>
        <dbReference type="HAMAP-Rule" id="MF_01543"/>
    </source>
</evidence>
<comment type="catalytic activity">
    <reaction evidence="1">
        <text>(6S)-5,6,7,8-tetrahydrofolate + formate + ATP = (6R)-10-formyltetrahydrofolate + ADP + phosphate</text>
        <dbReference type="Rhea" id="RHEA:20221"/>
        <dbReference type="ChEBI" id="CHEBI:15740"/>
        <dbReference type="ChEBI" id="CHEBI:30616"/>
        <dbReference type="ChEBI" id="CHEBI:43474"/>
        <dbReference type="ChEBI" id="CHEBI:57453"/>
        <dbReference type="ChEBI" id="CHEBI:195366"/>
        <dbReference type="ChEBI" id="CHEBI:456216"/>
        <dbReference type="EC" id="6.3.4.3"/>
    </reaction>
</comment>
<comment type="pathway">
    <text evidence="1">One-carbon metabolism; tetrahydrofolate interconversion.</text>
</comment>
<comment type="similarity">
    <text evidence="1">Belongs to the formate--tetrahydrofolate ligase family.</text>
</comment>
<protein>
    <recommendedName>
        <fullName evidence="1">Formate--tetrahydrofolate ligase</fullName>
        <ecNumber evidence="1">6.3.4.3</ecNumber>
    </recommendedName>
    <alternativeName>
        <fullName evidence="1">Formyltetrahydrofolate synthetase</fullName>
        <shortName evidence="1">FHS</shortName>
        <shortName evidence="1">FTHFS</shortName>
    </alternativeName>
</protein>
<feature type="chain" id="PRO_0000293043" description="Formate--tetrahydrofolate ligase">
    <location>
        <begin position="1"/>
        <end position="552"/>
    </location>
</feature>
<feature type="binding site" evidence="1">
    <location>
        <begin position="62"/>
        <end position="69"/>
    </location>
    <ligand>
        <name>ATP</name>
        <dbReference type="ChEBI" id="CHEBI:30616"/>
    </ligand>
</feature>
<accession>Q1WTW0</accession>